<organism>
    <name type="scientific">Dehalococcoides mccartyi (strain CBDB1)</name>
    <dbReference type="NCBI Taxonomy" id="255470"/>
    <lineage>
        <taxon>Bacteria</taxon>
        <taxon>Bacillati</taxon>
        <taxon>Chloroflexota</taxon>
        <taxon>Dehalococcoidia</taxon>
        <taxon>Dehalococcoidales</taxon>
        <taxon>Dehalococcoidaceae</taxon>
        <taxon>Dehalococcoides</taxon>
    </lineage>
</organism>
<sequence length="176" mass="18925">MVKKIRIKKKIAVDELTDALAVAQSAVFTDYRGINTSELTTIRVKLREAGVGYRVLKNTLARRAADNTDHSNIKGAFEGPVAMAYSSNDVVAPARVLMDYISSSKSNLKVTGGYLSNKLISVEEVAELAKLPSREVLISKILAGMQSPITGLAMVLNGPARGLAIVLQARIKQLEG</sequence>
<reference key="1">
    <citation type="journal article" date="2005" name="Nat. Biotechnol.">
        <title>Genome sequence of the chlorinated compound-respiring bacterium Dehalococcoides species strain CBDB1.</title>
        <authorList>
            <person name="Kube M."/>
            <person name="Beck A."/>
            <person name="Zinder S.H."/>
            <person name="Kuhl H."/>
            <person name="Reinhardt R."/>
            <person name="Adrian L."/>
        </authorList>
    </citation>
    <scope>NUCLEOTIDE SEQUENCE [LARGE SCALE GENOMIC DNA]</scope>
    <source>
        <strain>CBDB1</strain>
    </source>
</reference>
<gene>
    <name evidence="1" type="primary">rplJ</name>
    <name type="ordered locus">cbdbA955</name>
</gene>
<proteinExistence type="inferred from homology"/>
<dbReference type="EMBL" id="AJ965256">
    <property type="protein sequence ID" value="CAI83081.1"/>
    <property type="molecule type" value="Genomic_DNA"/>
</dbReference>
<dbReference type="RefSeq" id="WP_011309432.1">
    <property type="nucleotide sequence ID" value="NC_007356.1"/>
</dbReference>
<dbReference type="SMR" id="Q3ZXX9"/>
<dbReference type="KEGG" id="deh:cbdbA955"/>
<dbReference type="HOGENOM" id="CLU_092227_2_1_0"/>
<dbReference type="Proteomes" id="UP000000433">
    <property type="component" value="Chromosome"/>
</dbReference>
<dbReference type="GO" id="GO:0015934">
    <property type="term" value="C:large ribosomal subunit"/>
    <property type="evidence" value="ECO:0007669"/>
    <property type="project" value="InterPro"/>
</dbReference>
<dbReference type="GO" id="GO:0070180">
    <property type="term" value="F:large ribosomal subunit rRNA binding"/>
    <property type="evidence" value="ECO:0007669"/>
    <property type="project" value="UniProtKB-UniRule"/>
</dbReference>
<dbReference type="GO" id="GO:0003735">
    <property type="term" value="F:structural constituent of ribosome"/>
    <property type="evidence" value="ECO:0007669"/>
    <property type="project" value="InterPro"/>
</dbReference>
<dbReference type="GO" id="GO:0006412">
    <property type="term" value="P:translation"/>
    <property type="evidence" value="ECO:0007669"/>
    <property type="project" value="UniProtKB-UniRule"/>
</dbReference>
<dbReference type="CDD" id="cd05797">
    <property type="entry name" value="Ribosomal_L10"/>
    <property type="match status" value="1"/>
</dbReference>
<dbReference type="Gene3D" id="3.30.70.1730">
    <property type="match status" value="1"/>
</dbReference>
<dbReference type="Gene3D" id="6.10.250.290">
    <property type="match status" value="1"/>
</dbReference>
<dbReference type="HAMAP" id="MF_00362">
    <property type="entry name" value="Ribosomal_uL10"/>
    <property type="match status" value="1"/>
</dbReference>
<dbReference type="InterPro" id="IPR001790">
    <property type="entry name" value="Ribosomal_uL10"/>
</dbReference>
<dbReference type="InterPro" id="IPR043141">
    <property type="entry name" value="Ribosomal_uL10-like_sf"/>
</dbReference>
<dbReference type="InterPro" id="IPR022973">
    <property type="entry name" value="Ribosomal_uL10_bac"/>
</dbReference>
<dbReference type="InterPro" id="IPR047865">
    <property type="entry name" value="Ribosomal_uL10_bac_type"/>
</dbReference>
<dbReference type="InterPro" id="IPR002363">
    <property type="entry name" value="Ribosomal_uL10_CS_bac"/>
</dbReference>
<dbReference type="NCBIfam" id="NF000955">
    <property type="entry name" value="PRK00099.1-1"/>
    <property type="match status" value="1"/>
</dbReference>
<dbReference type="PANTHER" id="PTHR11560">
    <property type="entry name" value="39S RIBOSOMAL PROTEIN L10, MITOCHONDRIAL"/>
    <property type="match status" value="1"/>
</dbReference>
<dbReference type="Pfam" id="PF00466">
    <property type="entry name" value="Ribosomal_L10"/>
    <property type="match status" value="1"/>
</dbReference>
<dbReference type="SUPFAM" id="SSF160369">
    <property type="entry name" value="Ribosomal protein L10-like"/>
    <property type="match status" value="1"/>
</dbReference>
<dbReference type="PROSITE" id="PS01109">
    <property type="entry name" value="RIBOSOMAL_L10"/>
    <property type="match status" value="1"/>
</dbReference>
<feature type="chain" id="PRO_0000234848" description="Large ribosomal subunit protein uL10">
    <location>
        <begin position="1"/>
        <end position="176"/>
    </location>
</feature>
<protein>
    <recommendedName>
        <fullName evidence="1">Large ribosomal subunit protein uL10</fullName>
    </recommendedName>
    <alternativeName>
        <fullName evidence="2">50S ribosomal protein L10</fullName>
    </alternativeName>
</protein>
<keyword id="KW-0687">Ribonucleoprotein</keyword>
<keyword id="KW-0689">Ribosomal protein</keyword>
<keyword id="KW-0694">RNA-binding</keyword>
<keyword id="KW-0699">rRNA-binding</keyword>
<comment type="function">
    <text evidence="1">Forms part of the ribosomal stalk, playing a central role in the interaction of the ribosome with GTP-bound translation factors.</text>
</comment>
<comment type="subunit">
    <text evidence="1">Part of the ribosomal stalk of the 50S ribosomal subunit. The N-terminus interacts with L11 and the large rRNA to form the base of the stalk. The C-terminus forms an elongated spine to which L12 dimers bind in a sequential fashion forming a multimeric L10(L12)X complex.</text>
</comment>
<comment type="similarity">
    <text evidence="1">Belongs to the universal ribosomal protein uL10 family.</text>
</comment>
<name>RL10_DEHMC</name>
<evidence type="ECO:0000255" key="1">
    <source>
        <dbReference type="HAMAP-Rule" id="MF_00362"/>
    </source>
</evidence>
<evidence type="ECO:0000305" key="2"/>
<accession>Q3ZXX9</accession>